<accession>P42207</accession>
<accession>Q8IQ47</accession>
<accession>Q9VRH5</accession>
<comment type="function">
    <text evidence="4 8">Involved in cytokinesis (Probable). May be involved in p53-dependent apoptosis (PubMed:17456438).</text>
</comment>
<comment type="subunit">
    <text evidence="4 5">Likely part of a multicomponent septin complex that includes pnut (PubMed:8590810). Interacts with pnut (PubMed:8590810). Interacts with park (PubMed:17456438).</text>
</comment>
<comment type="subcellular location">
    <subcellularLocation>
        <location evidence="5">Cytoplasm</location>
    </subcellularLocation>
</comment>
<comment type="tissue specificity">
    <text evidence="5">Accumulates at the leading edge of the cleavage furrow in dividing cells and cellularizing embryos (at protein level) (PubMed:8590810). Also accumulates at the leading edge of the embryo epithelium during dorsal closure, in the embryonic neurons, and at the baso-lateral surfaces of ovarian follicle cells (at protein level) (PubMed:8590810).</text>
</comment>
<comment type="PTM">
    <text evidence="4">Ubiquitinated by park, leading to its degradation by the proteasome.</text>
</comment>
<comment type="similarity">
    <text evidence="2">Belongs to the TRAFAC class TrmE-Era-EngA-EngB-Septin-like GTPase superfamily. Septin GTPase family.</text>
</comment>
<protein>
    <recommendedName>
        <fullName evidence="6">Septin-1</fullName>
    </recommendedName>
    <alternativeName>
        <fullName evidence="7">DIFF6 protein homolog</fullName>
    </alternativeName>
    <alternativeName>
        <fullName evidence="7">Protein innocent bystander</fullName>
    </alternativeName>
</protein>
<keyword id="KW-0002">3D-structure</keyword>
<keyword id="KW-0131">Cell cycle</keyword>
<keyword id="KW-0132">Cell division</keyword>
<keyword id="KW-0963">Cytoplasm</keyword>
<keyword id="KW-0342">GTP-binding</keyword>
<keyword id="KW-0547">Nucleotide-binding</keyword>
<keyword id="KW-0597">Phosphoprotein</keyword>
<keyword id="KW-1185">Reference proteome</keyword>
<keyword id="KW-0832">Ubl conjugation</keyword>
<name>SEPT1_DROME</name>
<sequence length="361" mass="41131">MADTKGFSSIETPGYVGFANLPNQVHRKSVKKGFEFTLMVVGESGLGKSTLVNSLFLTDLYPERIIPDAIEKQKQTVKLEASTVEIEERGVKLRLTVVDTPGFGDAIDNSNSFGAILEYIDEQYERFLRDESGLNRRNIVDNRIHCCFYFISPFGHGLKPLDVEFMKKLHSKVNIVPVIAKADCLTKKEILRLKCRIMQEIESHGIKIYPLPDCDSDEDEDYKEQVKQLKEAVPFAVCGANTLLEVKGKKVRGRLYPWGVVEVENPDHCDFIKLRTMLITHMQDLQEVTQEVHYENYRSDRLAKGIKGKENGVKAERDSSSQVVSNSVLGEKDRILQEKEAELRRMQEMLAQMQARMQAQQ</sequence>
<gene>
    <name evidence="6 9" type="primary">Septin1</name>
    <name evidence="7" type="synonym">Diff6</name>
    <name evidence="7" type="synonym">iby</name>
    <name evidence="6" type="synonym">Sep1</name>
    <name evidence="9" type="ORF">CG1403</name>
</gene>
<proteinExistence type="evidence at protein level"/>
<feature type="chain" id="PRO_0000173511" description="Septin-1">
    <location>
        <begin position="1"/>
        <end position="361"/>
    </location>
</feature>
<feature type="domain" description="Septin-type G" evidence="2">
    <location>
        <begin position="32"/>
        <end position="304"/>
    </location>
</feature>
<feature type="region of interest" description="G1 motif" evidence="2">
    <location>
        <begin position="42"/>
        <end position="49"/>
    </location>
</feature>
<feature type="region of interest" description="G3 motif" evidence="2">
    <location>
        <begin position="99"/>
        <end position="102"/>
    </location>
</feature>
<feature type="region of interest" description="G4 motif" evidence="2">
    <location>
        <begin position="180"/>
        <end position="183"/>
    </location>
</feature>
<feature type="binding site" evidence="1">
    <location>
        <begin position="42"/>
        <end position="49"/>
    </location>
    <ligand>
        <name>GTP</name>
        <dbReference type="ChEBI" id="CHEBI:37565"/>
    </ligand>
</feature>
<feature type="binding site" evidence="1">
    <location>
        <position position="76"/>
    </location>
    <ligand>
        <name>GTP</name>
        <dbReference type="ChEBI" id="CHEBI:37565"/>
    </ligand>
</feature>
<feature type="binding site" evidence="1">
    <location>
        <position position="102"/>
    </location>
    <ligand>
        <name>GTP</name>
        <dbReference type="ChEBI" id="CHEBI:37565"/>
    </ligand>
</feature>
<feature type="binding site" evidence="1">
    <location>
        <begin position="181"/>
        <end position="189"/>
    </location>
    <ligand>
        <name>GTP</name>
        <dbReference type="ChEBI" id="CHEBI:37565"/>
    </ligand>
</feature>
<feature type="binding site" evidence="1">
    <location>
        <position position="239"/>
    </location>
    <ligand>
        <name>GTP</name>
        <dbReference type="ChEBI" id="CHEBI:37565"/>
    </ligand>
</feature>
<feature type="binding site" evidence="1">
    <location>
        <position position="254"/>
    </location>
    <ligand>
        <name>GTP</name>
        <dbReference type="ChEBI" id="CHEBI:37565"/>
    </ligand>
</feature>
<feature type="modified residue" description="Phosphoserine" evidence="3">
    <location>
        <position position="319"/>
    </location>
</feature>
<feature type="strand" evidence="10">
    <location>
        <begin position="36"/>
        <end position="41"/>
    </location>
</feature>
<feature type="helix" evidence="10">
    <location>
        <begin position="48"/>
        <end position="56"/>
    </location>
</feature>
<feature type="helix" evidence="10">
    <location>
        <begin position="69"/>
        <end position="71"/>
    </location>
</feature>
<feature type="strand" evidence="10">
    <location>
        <begin position="80"/>
        <end position="88"/>
    </location>
</feature>
<feature type="strand" evidence="10">
    <location>
        <begin position="91"/>
        <end position="99"/>
    </location>
</feature>
<feature type="turn" evidence="10">
    <location>
        <begin position="101"/>
        <end position="104"/>
    </location>
</feature>
<feature type="strand" evidence="10">
    <location>
        <begin position="106"/>
        <end position="108"/>
    </location>
</feature>
<feature type="turn" evidence="10">
    <location>
        <begin position="110"/>
        <end position="113"/>
    </location>
</feature>
<feature type="helix" evidence="10">
    <location>
        <begin position="114"/>
        <end position="132"/>
    </location>
</feature>
<feature type="strand" evidence="10">
    <location>
        <begin position="146"/>
        <end position="151"/>
    </location>
</feature>
<feature type="strand" evidence="10">
    <location>
        <begin position="155"/>
        <end position="157"/>
    </location>
</feature>
<feature type="helix" evidence="10">
    <location>
        <begin position="160"/>
        <end position="166"/>
    </location>
</feature>
<feature type="turn" evidence="10">
    <location>
        <begin position="167"/>
        <end position="172"/>
    </location>
</feature>
<feature type="strand" evidence="10">
    <location>
        <begin position="175"/>
        <end position="180"/>
    </location>
</feature>
<feature type="helix" evidence="10">
    <location>
        <begin position="182"/>
        <end position="184"/>
    </location>
</feature>
<feature type="helix" evidence="10">
    <location>
        <begin position="187"/>
        <end position="204"/>
    </location>
</feature>
<feature type="helix" evidence="10">
    <location>
        <begin position="220"/>
        <end position="232"/>
    </location>
</feature>
<feature type="strand" evidence="10">
    <location>
        <begin position="234"/>
        <end position="236"/>
    </location>
</feature>
<feature type="strand" evidence="10">
    <location>
        <begin position="252"/>
        <end position="256"/>
    </location>
</feature>
<feature type="strand" evidence="10">
    <location>
        <begin position="259"/>
        <end position="264"/>
    </location>
</feature>
<feature type="turn" evidence="10">
    <location>
        <begin position="266"/>
        <end position="268"/>
    </location>
</feature>
<feature type="helix" evidence="10">
    <location>
        <begin position="271"/>
        <end position="280"/>
    </location>
</feature>
<feature type="helix" evidence="10">
    <location>
        <begin position="282"/>
        <end position="291"/>
    </location>
</feature>
<feature type="helix" evidence="10">
    <location>
        <begin position="293"/>
        <end position="302"/>
    </location>
</feature>
<reference key="1">
    <citation type="journal article" date="1995" name="Mol. Biol. Cell">
        <title>Localization and possible functions of Drosophila septins.</title>
        <authorList>
            <person name="Fares H."/>
            <person name="Peifer M."/>
            <person name="Pringle J.R."/>
        </authorList>
    </citation>
    <scope>NUCLEOTIDE SEQUENCE [GENOMIC DNA]</scope>
    <scope>INTERACTION WITH PNUT</scope>
    <scope>SUBCELLULAR LOCATION</scope>
    <scope>TISSUE SPECIFICITY</scope>
    <source>
        <tissue>Embryo</tissue>
    </source>
</reference>
<reference key="2">
    <citation type="submission" date="1992-07" db="EMBL/GenBank/DDBJ databases">
        <authorList>
            <person name="Hayward D.C."/>
            <person name="Delaney S.J."/>
            <person name="Miklos G.L.G."/>
        </authorList>
    </citation>
    <scope>NUCLEOTIDE SEQUENCE [MRNA]</scope>
    <source>
        <tissue>Embryo</tissue>
    </source>
</reference>
<reference key="3">
    <citation type="journal article" date="1998" name="Proc. Natl. Acad. Sci. U.S.A.">
        <title>Data transferability from model organisms to human beings: insights from the functional genomics of the flightless region of Drosophila.</title>
        <authorList>
            <person name="Maleszka R."/>
            <person name="de Couet H.G."/>
            <person name="Miklos G.L.G."/>
        </authorList>
    </citation>
    <scope>NUCLEOTIDE SEQUENCE [GENOMIC DNA]</scope>
    <source>
        <strain>Canton-S</strain>
    </source>
</reference>
<reference key="4">
    <citation type="journal article" date="2000" name="Science">
        <title>The genome sequence of Drosophila melanogaster.</title>
        <authorList>
            <person name="Adams M.D."/>
            <person name="Celniker S.E."/>
            <person name="Holt R.A."/>
            <person name="Evans C.A."/>
            <person name="Gocayne J.D."/>
            <person name="Amanatides P.G."/>
            <person name="Scherer S.E."/>
            <person name="Li P.W."/>
            <person name="Hoskins R.A."/>
            <person name="Galle R.F."/>
            <person name="George R.A."/>
            <person name="Lewis S.E."/>
            <person name="Richards S."/>
            <person name="Ashburner M."/>
            <person name="Henderson S.N."/>
            <person name="Sutton G.G."/>
            <person name="Wortman J.R."/>
            <person name="Yandell M.D."/>
            <person name="Zhang Q."/>
            <person name="Chen L.X."/>
            <person name="Brandon R.C."/>
            <person name="Rogers Y.-H.C."/>
            <person name="Blazej R.G."/>
            <person name="Champe M."/>
            <person name="Pfeiffer B.D."/>
            <person name="Wan K.H."/>
            <person name="Doyle C."/>
            <person name="Baxter E.G."/>
            <person name="Helt G."/>
            <person name="Nelson C.R."/>
            <person name="Miklos G.L.G."/>
            <person name="Abril J.F."/>
            <person name="Agbayani A."/>
            <person name="An H.-J."/>
            <person name="Andrews-Pfannkoch C."/>
            <person name="Baldwin D."/>
            <person name="Ballew R.M."/>
            <person name="Basu A."/>
            <person name="Baxendale J."/>
            <person name="Bayraktaroglu L."/>
            <person name="Beasley E.M."/>
            <person name="Beeson K.Y."/>
            <person name="Benos P.V."/>
            <person name="Berman B.P."/>
            <person name="Bhandari D."/>
            <person name="Bolshakov S."/>
            <person name="Borkova D."/>
            <person name="Botchan M.R."/>
            <person name="Bouck J."/>
            <person name="Brokstein P."/>
            <person name="Brottier P."/>
            <person name="Burtis K.C."/>
            <person name="Busam D.A."/>
            <person name="Butler H."/>
            <person name="Cadieu E."/>
            <person name="Center A."/>
            <person name="Chandra I."/>
            <person name="Cherry J.M."/>
            <person name="Cawley S."/>
            <person name="Dahlke C."/>
            <person name="Davenport L.B."/>
            <person name="Davies P."/>
            <person name="de Pablos B."/>
            <person name="Delcher A."/>
            <person name="Deng Z."/>
            <person name="Mays A.D."/>
            <person name="Dew I."/>
            <person name="Dietz S.M."/>
            <person name="Dodson K."/>
            <person name="Doup L.E."/>
            <person name="Downes M."/>
            <person name="Dugan-Rocha S."/>
            <person name="Dunkov B.C."/>
            <person name="Dunn P."/>
            <person name="Durbin K.J."/>
            <person name="Evangelista C.C."/>
            <person name="Ferraz C."/>
            <person name="Ferriera S."/>
            <person name="Fleischmann W."/>
            <person name="Fosler C."/>
            <person name="Gabrielian A.E."/>
            <person name="Garg N.S."/>
            <person name="Gelbart W.M."/>
            <person name="Glasser K."/>
            <person name="Glodek A."/>
            <person name="Gong F."/>
            <person name="Gorrell J.H."/>
            <person name="Gu Z."/>
            <person name="Guan P."/>
            <person name="Harris M."/>
            <person name="Harris N.L."/>
            <person name="Harvey D.A."/>
            <person name="Heiman T.J."/>
            <person name="Hernandez J.R."/>
            <person name="Houck J."/>
            <person name="Hostin D."/>
            <person name="Houston K.A."/>
            <person name="Howland T.J."/>
            <person name="Wei M.-H."/>
            <person name="Ibegwam C."/>
            <person name="Jalali M."/>
            <person name="Kalush F."/>
            <person name="Karpen G.H."/>
            <person name="Ke Z."/>
            <person name="Kennison J.A."/>
            <person name="Ketchum K.A."/>
            <person name="Kimmel B.E."/>
            <person name="Kodira C.D."/>
            <person name="Kraft C.L."/>
            <person name="Kravitz S."/>
            <person name="Kulp D."/>
            <person name="Lai Z."/>
            <person name="Lasko P."/>
            <person name="Lei Y."/>
            <person name="Levitsky A.A."/>
            <person name="Li J.H."/>
            <person name="Li Z."/>
            <person name="Liang Y."/>
            <person name="Lin X."/>
            <person name="Liu X."/>
            <person name="Mattei B."/>
            <person name="McIntosh T.C."/>
            <person name="McLeod M.P."/>
            <person name="McPherson D."/>
            <person name="Merkulov G."/>
            <person name="Milshina N.V."/>
            <person name="Mobarry C."/>
            <person name="Morris J."/>
            <person name="Moshrefi A."/>
            <person name="Mount S.M."/>
            <person name="Moy M."/>
            <person name="Murphy B."/>
            <person name="Murphy L."/>
            <person name="Muzny D.M."/>
            <person name="Nelson D.L."/>
            <person name="Nelson D.R."/>
            <person name="Nelson K.A."/>
            <person name="Nixon K."/>
            <person name="Nusskern D.R."/>
            <person name="Pacleb J.M."/>
            <person name="Palazzolo M."/>
            <person name="Pittman G.S."/>
            <person name="Pan S."/>
            <person name="Pollard J."/>
            <person name="Puri V."/>
            <person name="Reese M.G."/>
            <person name="Reinert K."/>
            <person name="Remington K."/>
            <person name="Saunders R.D.C."/>
            <person name="Scheeler F."/>
            <person name="Shen H."/>
            <person name="Shue B.C."/>
            <person name="Siden-Kiamos I."/>
            <person name="Simpson M."/>
            <person name="Skupski M.P."/>
            <person name="Smith T.J."/>
            <person name="Spier E."/>
            <person name="Spradling A.C."/>
            <person name="Stapleton M."/>
            <person name="Strong R."/>
            <person name="Sun E."/>
            <person name="Svirskas R."/>
            <person name="Tector C."/>
            <person name="Turner R."/>
            <person name="Venter E."/>
            <person name="Wang A.H."/>
            <person name="Wang X."/>
            <person name="Wang Z.-Y."/>
            <person name="Wassarman D.A."/>
            <person name="Weinstock G.M."/>
            <person name="Weissenbach J."/>
            <person name="Williams S.M."/>
            <person name="Woodage T."/>
            <person name="Worley K.C."/>
            <person name="Wu D."/>
            <person name="Yang S."/>
            <person name="Yao Q.A."/>
            <person name="Ye J."/>
            <person name="Yeh R.-F."/>
            <person name="Zaveri J.S."/>
            <person name="Zhan M."/>
            <person name="Zhang G."/>
            <person name="Zhao Q."/>
            <person name="Zheng L."/>
            <person name="Zheng X.H."/>
            <person name="Zhong F.N."/>
            <person name="Zhong W."/>
            <person name="Zhou X."/>
            <person name="Zhu S.C."/>
            <person name="Zhu X."/>
            <person name="Smith H.O."/>
            <person name="Gibbs R.A."/>
            <person name="Myers E.W."/>
            <person name="Rubin G.M."/>
            <person name="Venter J.C."/>
        </authorList>
    </citation>
    <scope>NUCLEOTIDE SEQUENCE [LARGE SCALE GENOMIC DNA]</scope>
    <source>
        <strain>Berkeley</strain>
    </source>
</reference>
<reference key="5">
    <citation type="journal article" date="2002" name="Genome Biol.">
        <title>Annotation of the Drosophila melanogaster euchromatic genome: a systematic review.</title>
        <authorList>
            <person name="Misra S."/>
            <person name="Crosby M.A."/>
            <person name="Mungall C.J."/>
            <person name="Matthews B.B."/>
            <person name="Campbell K.S."/>
            <person name="Hradecky P."/>
            <person name="Huang Y."/>
            <person name="Kaminker J.S."/>
            <person name="Millburn G.H."/>
            <person name="Prochnik S.E."/>
            <person name="Smith C.D."/>
            <person name="Tupy J.L."/>
            <person name="Whitfield E.J."/>
            <person name="Bayraktaroglu L."/>
            <person name="Berman B.P."/>
            <person name="Bettencourt B.R."/>
            <person name="Celniker S.E."/>
            <person name="de Grey A.D.N.J."/>
            <person name="Drysdale R.A."/>
            <person name="Harris N.L."/>
            <person name="Richter J."/>
            <person name="Russo S."/>
            <person name="Schroeder A.J."/>
            <person name="Shu S.Q."/>
            <person name="Stapleton M."/>
            <person name="Yamada C."/>
            <person name="Ashburner M."/>
            <person name="Gelbart W.M."/>
            <person name="Rubin G.M."/>
            <person name="Lewis S.E."/>
        </authorList>
    </citation>
    <scope>GENOME REANNOTATION</scope>
    <source>
        <strain>Berkeley</strain>
    </source>
</reference>
<reference key="6">
    <citation type="journal article" date="2007" name="Insect Biochem. Mol. Biol.">
        <title>Drosophila melanogaster Parkin ubiquitinates peanut and septin1 as an E3 ubiquitin-protein ligase.</title>
        <authorList>
            <person name="Bae Y.J."/>
            <person name="Kang S.J."/>
            <person name="Park K.S."/>
        </authorList>
    </citation>
    <scope>FUNCTION</scope>
    <scope>INTERACTION WITH PARK</scope>
    <scope>UBIQUITINATION</scope>
</reference>
<reference key="7">
    <citation type="journal article" date="2007" name="Mol. Biosyst.">
        <title>An integrated chemical, mass spectrometric and computational strategy for (quantitative) phosphoproteomics: application to Drosophila melanogaster Kc167 cells.</title>
        <authorList>
            <person name="Bodenmiller B."/>
            <person name="Mueller L.N."/>
            <person name="Pedrioli P.G.A."/>
            <person name="Pflieger D."/>
            <person name="Juenger M.A."/>
            <person name="Eng J.K."/>
            <person name="Aebersold R."/>
            <person name="Tao W.A."/>
        </authorList>
    </citation>
    <scope>PHOSPHORYLATION [LARGE SCALE ANALYSIS] AT SER-319</scope>
    <scope>IDENTIFICATION BY MASS SPECTROMETRY</scope>
</reference>
<evidence type="ECO:0000250" key="1"/>
<evidence type="ECO:0000255" key="2">
    <source>
        <dbReference type="PROSITE-ProRule" id="PRU01056"/>
    </source>
</evidence>
<evidence type="ECO:0000269" key="3">
    <source>
    </source>
</evidence>
<evidence type="ECO:0000269" key="4">
    <source>
    </source>
</evidence>
<evidence type="ECO:0000269" key="5">
    <source>
    </source>
</evidence>
<evidence type="ECO:0000303" key="6">
    <source>
    </source>
</evidence>
<evidence type="ECO:0000303" key="7">
    <source>
    </source>
</evidence>
<evidence type="ECO:0000305" key="8"/>
<evidence type="ECO:0000312" key="9">
    <source>
        <dbReference type="FlyBase" id="FBgn0011710"/>
    </source>
</evidence>
<evidence type="ECO:0007829" key="10">
    <source>
        <dbReference type="PDB" id="8DKT"/>
    </source>
</evidence>
<dbReference type="EMBL" id="L33246">
    <property type="protein sequence ID" value="AAC34305.1"/>
    <property type="molecule type" value="Genomic_DNA"/>
</dbReference>
<dbReference type="EMBL" id="X67202">
    <property type="protein sequence ID" value="CAA47638.1"/>
    <property type="molecule type" value="mRNA"/>
</dbReference>
<dbReference type="EMBL" id="AF017777">
    <property type="protein sequence ID" value="AAC28401.1"/>
    <property type="molecule type" value="Genomic_DNA"/>
</dbReference>
<dbReference type="EMBL" id="AE014298">
    <property type="protein sequence ID" value="AAF50825.1"/>
    <property type="molecule type" value="Genomic_DNA"/>
</dbReference>
<dbReference type="PIR" id="S25063">
    <property type="entry name" value="S25063"/>
</dbReference>
<dbReference type="RefSeq" id="NP_523430.1">
    <property type="nucleotide sequence ID" value="NM_078706.4"/>
</dbReference>
<dbReference type="PDB" id="8DKT">
    <property type="method" value="X-ray"/>
    <property type="resolution" value="2.38 A"/>
    <property type="chains" value="A=33-306"/>
</dbReference>
<dbReference type="PDBsum" id="8DKT"/>
<dbReference type="SMR" id="P42207"/>
<dbReference type="BioGRID" id="59391">
    <property type="interactions" value="15"/>
</dbReference>
<dbReference type="DIP" id="DIP-18454N"/>
<dbReference type="FunCoup" id="P42207">
    <property type="interactions" value="1502"/>
</dbReference>
<dbReference type="IntAct" id="P42207">
    <property type="interactions" value="40"/>
</dbReference>
<dbReference type="STRING" id="7227.FBpp0076897"/>
<dbReference type="iPTMnet" id="P42207"/>
<dbReference type="PaxDb" id="7227-FBpp0076897"/>
<dbReference type="EnsemblMetazoa" id="FBtr0077198">
    <property type="protein sequence ID" value="FBpp0076897"/>
    <property type="gene ID" value="FBgn0011710"/>
</dbReference>
<dbReference type="GeneID" id="33114"/>
<dbReference type="KEGG" id="dme:Dmel_CG1403"/>
<dbReference type="UCSC" id="CG1403-RB">
    <property type="organism name" value="d. melanogaster"/>
</dbReference>
<dbReference type="AGR" id="FB:FBgn0011710"/>
<dbReference type="CTD" id="1731"/>
<dbReference type="FlyBase" id="FBgn0011710">
    <property type="gene designation" value="Septin1"/>
</dbReference>
<dbReference type="VEuPathDB" id="VectorBase:FBgn0011710"/>
<dbReference type="eggNOG" id="KOG2655">
    <property type="taxonomic scope" value="Eukaryota"/>
</dbReference>
<dbReference type="HOGENOM" id="CLU_017718_0_0_1"/>
<dbReference type="InParanoid" id="P42207"/>
<dbReference type="OMA" id="EASHAEI"/>
<dbReference type="OrthoDB" id="416553at2759"/>
<dbReference type="PhylomeDB" id="P42207"/>
<dbReference type="BioGRID-ORCS" id="33114">
    <property type="hits" value="0 hits in 1 CRISPR screen"/>
</dbReference>
<dbReference type="ChiTaRS" id="Sep1">
    <property type="organism name" value="fly"/>
</dbReference>
<dbReference type="GenomeRNAi" id="33114"/>
<dbReference type="PRO" id="PR:P42207"/>
<dbReference type="Proteomes" id="UP000000803">
    <property type="component" value="Chromosome X"/>
</dbReference>
<dbReference type="Bgee" id="FBgn0011710">
    <property type="expression patterns" value="Expressed in adult enteroendocrine precursor cell in adult midgut (Drosophila) and 133 other cell types or tissues"/>
</dbReference>
<dbReference type="ExpressionAtlas" id="P42207">
    <property type="expression patterns" value="baseline and differential"/>
</dbReference>
<dbReference type="GO" id="GO:0032153">
    <property type="term" value="C:cell division site"/>
    <property type="evidence" value="ECO:0000318"/>
    <property type="project" value="GO_Central"/>
</dbReference>
<dbReference type="GO" id="GO:0032154">
    <property type="term" value="C:cleavage furrow"/>
    <property type="evidence" value="ECO:0000314"/>
    <property type="project" value="FlyBase"/>
</dbReference>
<dbReference type="GO" id="GO:0015630">
    <property type="term" value="C:microtubule cytoskeleton"/>
    <property type="evidence" value="ECO:0000318"/>
    <property type="project" value="GO_Central"/>
</dbReference>
<dbReference type="GO" id="GO:0031105">
    <property type="term" value="C:septin complex"/>
    <property type="evidence" value="ECO:0000314"/>
    <property type="project" value="FlyBase"/>
</dbReference>
<dbReference type="GO" id="GO:0005940">
    <property type="term" value="C:septin ring"/>
    <property type="evidence" value="ECO:0000318"/>
    <property type="project" value="GO_Central"/>
</dbReference>
<dbReference type="GO" id="GO:0051015">
    <property type="term" value="F:actin filament binding"/>
    <property type="evidence" value="ECO:0000314"/>
    <property type="project" value="FlyBase"/>
</dbReference>
<dbReference type="GO" id="GO:0005525">
    <property type="term" value="F:GTP binding"/>
    <property type="evidence" value="ECO:0000314"/>
    <property type="project" value="FlyBase"/>
</dbReference>
<dbReference type="GO" id="GO:0003924">
    <property type="term" value="F:GTPase activity"/>
    <property type="evidence" value="ECO:0000314"/>
    <property type="project" value="FlyBase"/>
</dbReference>
<dbReference type="GO" id="GO:0060090">
    <property type="term" value="F:molecular adaptor activity"/>
    <property type="evidence" value="ECO:0000318"/>
    <property type="project" value="GO_Central"/>
</dbReference>
<dbReference type="GO" id="GO:0042803">
    <property type="term" value="F:protein homodimerization activity"/>
    <property type="evidence" value="ECO:0000314"/>
    <property type="project" value="FlyBase"/>
</dbReference>
<dbReference type="GO" id="GO:0031625">
    <property type="term" value="F:ubiquitin protein ligase binding"/>
    <property type="evidence" value="ECO:0000353"/>
    <property type="project" value="FlyBase"/>
</dbReference>
<dbReference type="GO" id="GO:0044837">
    <property type="term" value="P:actomyosin contractile ring organization"/>
    <property type="evidence" value="ECO:0000315"/>
    <property type="project" value="FlyBase"/>
</dbReference>
<dbReference type="GO" id="GO:0007298">
    <property type="term" value="P:border follicle cell migration"/>
    <property type="evidence" value="ECO:0000315"/>
    <property type="project" value="FlyBase"/>
</dbReference>
<dbReference type="GO" id="GO:0007349">
    <property type="term" value="P:cellularization"/>
    <property type="evidence" value="ECO:0000304"/>
    <property type="project" value="FlyBase"/>
</dbReference>
<dbReference type="GO" id="GO:0061640">
    <property type="term" value="P:cytoskeleton-dependent cytokinesis"/>
    <property type="evidence" value="ECO:0000318"/>
    <property type="project" value="GO_Central"/>
</dbReference>
<dbReference type="GO" id="GO:0007476">
    <property type="term" value="P:imaginal disc-derived wing morphogenesis"/>
    <property type="evidence" value="ECO:0000315"/>
    <property type="project" value="FlyBase"/>
</dbReference>
<dbReference type="GO" id="GO:0043065">
    <property type="term" value="P:positive regulation of apoptotic process"/>
    <property type="evidence" value="ECO:0000314"/>
    <property type="project" value="FlyBase"/>
</dbReference>
<dbReference type="GO" id="GO:0008104">
    <property type="term" value="P:protein localization"/>
    <property type="evidence" value="ECO:0000318"/>
    <property type="project" value="GO_Central"/>
</dbReference>
<dbReference type="GO" id="GO:0042060">
    <property type="term" value="P:wound healing"/>
    <property type="evidence" value="ECO:0000315"/>
    <property type="project" value="FlyBase"/>
</dbReference>
<dbReference type="CDD" id="cd01850">
    <property type="entry name" value="CDC_Septin"/>
    <property type="match status" value="1"/>
</dbReference>
<dbReference type="FunFam" id="3.40.50.300:FF:000064">
    <property type="entry name" value="Septin 4"/>
    <property type="match status" value="1"/>
</dbReference>
<dbReference type="Gene3D" id="3.40.50.300">
    <property type="entry name" value="P-loop containing nucleotide triphosphate hydrolases"/>
    <property type="match status" value="1"/>
</dbReference>
<dbReference type="InterPro" id="IPR030379">
    <property type="entry name" value="G_SEPTIN_dom"/>
</dbReference>
<dbReference type="InterPro" id="IPR027417">
    <property type="entry name" value="P-loop_NTPase"/>
</dbReference>
<dbReference type="InterPro" id="IPR016491">
    <property type="entry name" value="Septin"/>
</dbReference>
<dbReference type="PANTHER" id="PTHR18884">
    <property type="entry name" value="SEPTIN"/>
    <property type="match status" value="1"/>
</dbReference>
<dbReference type="Pfam" id="PF00735">
    <property type="entry name" value="Septin"/>
    <property type="match status" value="1"/>
</dbReference>
<dbReference type="PIRSF" id="PIRSF006698">
    <property type="entry name" value="Septin"/>
    <property type="match status" value="1"/>
</dbReference>
<dbReference type="SUPFAM" id="SSF52540">
    <property type="entry name" value="P-loop containing nucleoside triphosphate hydrolases"/>
    <property type="match status" value="1"/>
</dbReference>
<dbReference type="PROSITE" id="PS51719">
    <property type="entry name" value="G_SEPTIN"/>
    <property type="match status" value="1"/>
</dbReference>
<organism>
    <name type="scientific">Drosophila melanogaster</name>
    <name type="common">Fruit fly</name>
    <dbReference type="NCBI Taxonomy" id="7227"/>
    <lineage>
        <taxon>Eukaryota</taxon>
        <taxon>Metazoa</taxon>
        <taxon>Ecdysozoa</taxon>
        <taxon>Arthropoda</taxon>
        <taxon>Hexapoda</taxon>
        <taxon>Insecta</taxon>
        <taxon>Pterygota</taxon>
        <taxon>Neoptera</taxon>
        <taxon>Endopterygota</taxon>
        <taxon>Diptera</taxon>
        <taxon>Brachycera</taxon>
        <taxon>Muscomorpha</taxon>
        <taxon>Ephydroidea</taxon>
        <taxon>Drosophilidae</taxon>
        <taxon>Drosophila</taxon>
        <taxon>Sophophora</taxon>
    </lineage>
</organism>